<protein>
    <recommendedName>
        <fullName evidence="1">Large ribosomal subunit protein uL16</fullName>
    </recommendedName>
    <alternativeName>
        <fullName evidence="2">50S ribosomal protein L16</fullName>
    </alternativeName>
</protein>
<dbReference type="EMBL" id="CP000950">
    <property type="protein sequence ID" value="ACA66603.1"/>
    <property type="molecule type" value="Genomic_DNA"/>
</dbReference>
<dbReference type="RefSeq" id="WP_002218940.1">
    <property type="nucleotide sequence ID" value="NZ_CP009792.1"/>
</dbReference>
<dbReference type="SMR" id="B1JIW8"/>
<dbReference type="GeneID" id="97454238"/>
<dbReference type="KEGG" id="ypy:YPK_0290"/>
<dbReference type="PATRIC" id="fig|502800.11.peg.897"/>
<dbReference type="GO" id="GO:0022625">
    <property type="term" value="C:cytosolic large ribosomal subunit"/>
    <property type="evidence" value="ECO:0007669"/>
    <property type="project" value="TreeGrafter"/>
</dbReference>
<dbReference type="GO" id="GO:0019843">
    <property type="term" value="F:rRNA binding"/>
    <property type="evidence" value="ECO:0007669"/>
    <property type="project" value="UniProtKB-UniRule"/>
</dbReference>
<dbReference type="GO" id="GO:0003735">
    <property type="term" value="F:structural constituent of ribosome"/>
    <property type="evidence" value="ECO:0007669"/>
    <property type="project" value="InterPro"/>
</dbReference>
<dbReference type="GO" id="GO:0000049">
    <property type="term" value="F:tRNA binding"/>
    <property type="evidence" value="ECO:0007669"/>
    <property type="project" value="UniProtKB-KW"/>
</dbReference>
<dbReference type="GO" id="GO:0006412">
    <property type="term" value="P:translation"/>
    <property type="evidence" value="ECO:0007669"/>
    <property type="project" value="UniProtKB-UniRule"/>
</dbReference>
<dbReference type="CDD" id="cd01433">
    <property type="entry name" value="Ribosomal_L16_L10e"/>
    <property type="match status" value="1"/>
</dbReference>
<dbReference type="FunFam" id="3.90.1170.10:FF:000001">
    <property type="entry name" value="50S ribosomal protein L16"/>
    <property type="match status" value="1"/>
</dbReference>
<dbReference type="Gene3D" id="3.90.1170.10">
    <property type="entry name" value="Ribosomal protein L10e/L16"/>
    <property type="match status" value="1"/>
</dbReference>
<dbReference type="HAMAP" id="MF_01342">
    <property type="entry name" value="Ribosomal_uL16"/>
    <property type="match status" value="1"/>
</dbReference>
<dbReference type="InterPro" id="IPR047873">
    <property type="entry name" value="Ribosomal_uL16"/>
</dbReference>
<dbReference type="InterPro" id="IPR000114">
    <property type="entry name" value="Ribosomal_uL16_bact-type"/>
</dbReference>
<dbReference type="InterPro" id="IPR020798">
    <property type="entry name" value="Ribosomal_uL16_CS"/>
</dbReference>
<dbReference type="InterPro" id="IPR016180">
    <property type="entry name" value="Ribosomal_uL16_dom"/>
</dbReference>
<dbReference type="InterPro" id="IPR036920">
    <property type="entry name" value="Ribosomal_uL16_sf"/>
</dbReference>
<dbReference type="NCBIfam" id="TIGR01164">
    <property type="entry name" value="rplP_bact"/>
    <property type="match status" value="1"/>
</dbReference>
<dbReference type="PANTHER" id="PTHR12220">
    <property type="entry name" value="50S/60S RIBOSOMAL PROTEIN L16"/>
    <property type="match status" value="1"/>
</dbReference>
<dbReference type="PANTHER" id="PTHR12220:SF13">
    <property type="entry name" value="LARGE RIBOSOMAL SUBUNIT PROTEIN UL16M"/>
    <property type="match status" value="1"/>
</dbReference>
<dbReference type="Pfam" id="PF00252">
    <property type="entry name" value="Ribosomal_L16"/>
    <property type="match status" value="1"/>
</dbReference>
<dbReference type="PRINTS" id="PR00060">
    <property type="entry name" value="RIBOSOMALL16"/>
</dbReference>
<dbReference type="SUPFAM" id="SSF54686">
    <property type="entry name" value="Ribosomal protein L16p/L10e"/>
    <property type="match status" value="1"/>
</dbReference>
<dbReference type="PROSITE" id="PS00586">
    <property type="entry name" value="RIBOSOMAL_L16_1"/>
    <property type="match status" value="1"/>
</dbReference>
<dbReference type="PROSITE" id="PS00701">
    <property type="entry name" value="RIBOSOMAL_L16_2"/>
    <property type="match status" value="1"/>
</dbReference>
<proteinExistence type="inferred from homology"/>
<feature type="chain" id="PRO_1000143057" description="Large ribosomal subunit protein uL16">
    <location>
        <begin position="1"/>
        <end position="136"/>
    </location>
</feature>
<accession>B1JIW8</accession>
<name>RL16_YERPY</name>
<sequence length="136" mass="15274">MLQPKRTKFRKMHKGRNRGLAQGTDVSFGEFGLKACGRCRLTARQIEAARRAMTRAIKRQGKVWIRVFPDKPITEKPLEVRMGKGKGNVEYWVALIQPGKVLFEMAGVPEETAREAFKLAAAKLPVGTTFVTKTVM</sequence>
<gene>
    <name evidence="1" type="primary">rplP</name>
    <name type="ordered locus">YPK_0290</name>
</gene>
<reference key="1">
    <citation type="submission" date="2008-02" db="EMBL/GenBank/DDBJ databases">
        <title>Complete sequence of Yersinia pseudotuberculosis YPIII.</title>
        <authorList>
            <consortium name="US DOE Joint Genome Institute"/>
            <person name="Copeland A."/>
            <person name="Lucas S."/>
            <person name="Lapidus A."/>
            <person name="Glavina del Rio T."/>
            <person name="Dalin E."/>
            <person name="Tice H."/>
            <person name="Bruce D."/>
            <person name="Goodwin L."/>
            <person name="Pitluck S."/>
            <person name="Munk A.C."/>
            <person name="Brettin T."/>
            <person name="Detter J.C."/>
            <person name="Han C."/>
            <person name="Tapia R."/>
            <person name="Schmutz J."/>
            <person name="Larimer F."/>
            <person name="Land M."/>
            <person name="Hauser L."/>
            <person name="Challacombe J.F."/>
            <person name="Green L."/>
            <person name="Lindler L.E."/>
            <person name="Nikolich M.P."/>
            <person name="Richardson P."/>
        </authorList>
    </citation>
    <scope>NUCLEOTIDE SEQUENCE [LARGE SCALE GENOMIC DNA]</scope>
    <source>
        <strain>YPIII</strain>
    </source>
</reference>
<evidence type="ECO:0000255" key="1">
    <source>
        <dbReference type="HAMAP-Rule" id="MF_01342"/>
    </source>
</evidence>
<evidence type="ECO:0000305" key="2"/>
<organism>
    <name type="scientific">Yersinia pseudotuberculosis serotype O:3 (strain YPIII)</name>
    <dbReference type="NCBI Taxonomy" id="502800"/>
    <lineage>
        <taxon>Bacteria</taxon>
        <taxon>Pseudomonadati</taxon>
        <taxon>Pseudomonadota</taxon>
        <taxon>Gammaproteobacteria</taxon>
        <taxon>Enterobacterales</taxon>
        <taxon>Yersiniaceae</taxon>
        <taxon>Yersinia</taxon>
    </lineage>
</organism>
<keyword id="KW-0687">Ribonucleoprotein</keyword>
<keyword id="KW-0689">Ribosomal protein</keyword>
<keyword id="KW-0694">RNA-binding</keyword>
<keyword id="KW-0699">rRNA-binding</keyword>
<keyword id="KW-0820">tRNA-binding</keyword>
<comment type="function">
    <text evidence="1">Binds 23S rRNA and is also seen to make contacts with the A and possibly P site tRNAs.</text>
</comment>
<comment type="subunit">
    <text evidence="1">Part of the 50S ribosomal subunit.</text>
</comment>
<comment type="similarity">
    <text evidence="1">Belongs to the universal ribosomal protein uL16 family.</text>
</comment>